<gene>
    <name evidence="1" type="primary">rpoE</name>
    <name type="ordered locus">SERP1735</name>
</gene>
<protein>
    <recommendedName>
        <fullName evidence="1">Probable DNA-directed RNA polymerase subunit delta</fullName>
    </recommendedName>
    <alternativeName>
        <fullName evidence="1">RNAP delta factor</fullName>
    </alternativeName>
</protein>
<name>RPOE_STAEQ</name>
<proteinExistence type="inferred from homology"/>
<evidence type="ECO:0000255" key="1">
    <source>
        <dbReference type="HAMAP-Rule" id="MF_00357"/>
    </source>
</evidence>
<evidence type="ECO:0000255" key="2">
    <source>
        <dbReference type="PROSITE-ProRule" id="PRU01261"/>
    </source>
</evidence>
<evidence type="ECO:0000256" key="3">
    <source>
        <dbReference type="SAM" id="MobiDB-lite"/>
    </source>
</evidence>
<accession>Q5HM94</accession>
<keyword id="KW-0240">DNA-directed RNA polymerase</keyword>
<keyword id="KW-0548">Nucleotidyltransferase</keyword>
<keyword id="KW-1185">Reference proteome</keyword>
<keyword id="KW-0804">Transcription</keyword>
<keyword id="KW-0808">Transferase</keyword>
<feature type="chain" id="PRO_0000204327" description="Probable DNA-directed RNA polymerase subunit delta">
    <location>
        <begin position="1"/>
        <end position="178"/>
    </location>
</feature>
<feature type="domain" description="HTH HARE-type" evidence="2">
    <location>
        <begin position="14"/>
        <end position="81"/>
    </location>
</feature>
<feature type="region of interest" description="Disordered" evidence="3">
    <location>
        <begin position="114"/>
        <end position="178"/>
    </location>
</feature>
<feature type="compositionally biased region" description="Acidic residues" evidence="3">
    <location>
        <begin position="116"/>
        <end position="178"/>
    </location>
</feature>
<comment type="function">
    <text evidence="1">Participates in both the initiation and recycling phases of transcription. In the presence of the delta subunit, RNAP displays an increased specificity of transcription, a decreased affinity for nucleic acids, and an increased efficiency of RNA synthesis because of enhanced recycling.</text>
</comment>
<comment type="subunit">
    <text evidence="1">RNAP is composed of a core of 2 alpha, a beta and a beta' subunits. The core is associated with a delta subunit and one of several sigma factors.</text>
</comment>
<comment type="similarity">
    <text evidence="1">Belongs to the RpoE family.</text>
</comment>
<organism>
    <name type="scientific">Staphylococcus epidermidis (strain ATCC 35984 / DSM 28319 / BCRC 17069 / CCUG 31568 / BM 3577 / RP62A)</name>
    <dbReference type="NCBI Taxonomy" id="176279"/>
    <lineage>
        <taxon>Bacteria</taxon>
        <taxon>Bacillati</taxon>
        <taxon>Bacillota</taxon>
        <taxon>Bacilli</taxon>
        <taxon>Bacillales</taxon>
        <taxon>Staphylococcaceae</taxon>
        <taxon>Staphylococcus</taxon>
    </lineage>
</organism>
<sequence>MKIQDYTKEMVDEKSFIDMAYTLLNDKQTTMNLYDIIDEFKSLGGYEYEDIENRIVQFYTDLNTDGRFLNVGENLWGLRDWYSVDDIEEKIAPTIQKFDILDDEDEEDQNLKLLGDDDADEDDDIPAQTDDQETLDESDNDEDDVEMNEADIVIDEDEDEDIAEGEEEAFEDAEDFND</sequence>
<dbReference type="EMBL" id="CP000029">
    <property type="protein sequence ID" value="AAW55057.1"/>
    <property type="molecule type" value="Genomic_DNA"/>
</dbReference>
<dbReference type="RefSeq" id="WP_002468298.1">
    <property type="nucleotide sequence ID" value="NC_002976.3"/>
</dbReference>
<dbReference type="SMR" id="Q5HM94"/>
<dbReference type="STRING" id="176279.SERP1735"/>
<dbReference type="GeneID" id="50018175"/>
<dbReference type="KEGG" id="ser:SERP1735"/>
<dbReference type="eggNOG" id="COG3343">
    <property type="taxonomic scope" value="Bacteria"/>
</dbReference>
<dbReference type="HOGENOM" id="CLU_116648_1_0_9"/>
<dbReference type="Proteomes" id="UP000000531">
    <property type="component" value="Chromosome"/>
</dbReference>
<dbReference type="GO" id="GO:0000428">
    <property type="term" value="C:DNA-directed RNA polymerase complex"/>
    <property type="evidence" value="ECO:0007669"/>
    <property type="project" value="UniProtKB-KW"/>
</dbReference>
<dbReference type="GO" id="GO:0003899">
    <property type="term" value="F:DNA-directed RNA polymerase activity"/>
    <property type="evidence" value="ECO:0007669"/>
    <property type="project" value="UniProtKB-UniRule"/>
</dbReference>
<dbReference type="GO" id="GO:0006351">
    <property type="term" value="P:DNA-templated transcription"/>
    <property type="evidence" value="ECO:0007669"/>
    <property type="project" value="InterPro"/>
</dbReference>
<dbReference type="GO" id="GO:0006355">
    <property type="term" value="P:regulation of DNA-templated transcription"/>
    <property type="evidence" value="ECO:0007669"/>
    <property type="project" value="UniProtKB-UniRule"/>
</dbReference>
<dbReference type="Gene3D" id="1.10.10.1250">
    <property type="entry name" value="RNA polymerase, subunit delta, N-terminal domain"/>
    <property type="match status" value="1"/>
</dbReference>
<dbReference type="HAMAP" id="MF_00357">
    <property type="entry name" value="RNApol_bact_RpoE"/>
    <property type="match status" value="1"/>
</dbReference>
<dbReference type="InterPro" id="IPR007759">
    <property type="entry name" value="Asxl_HARE-HTH"/>
</dbReference>
<dbReference type="InterPro" id="IPR038087">
    <property type="entry name" value="RNAP_delta_N_dom_sf"/>
</dbReference>
<dbReference type="InterPro" id="IPR029757">
    <property type="entry name" value="RpoE"/>
</dbReference>
<dbReference type="NCBIfam" id="TIGR04567">
    <property type="entry name" value="RNAP_delt_lowGC"/>
    <property type="match status" value="1"/>
</dbReference>
<dbReference type="Pfam" id="PF05066">
    <property type="entry name" value="HARE-HTH"/>
    <property type="match status" value="1"/>
</dbReference>
<dbReference type="PROSITE" id="PS51913">
    <property type="entry name" value="HTH_HARE"/>
    <property type="match status" value="1"/>
</dbReference>
<reference key="1">
    <citation type="journal article" date="2005" name="J. Bacteriol.">
        <title>Insights on evolution of virulence and resistance from the complete genome analysis of an early methicillin-resistant Staphylococcus aureus strain and a biofilm-producing methicillin-resistant Staphylococcus epidermidis strain.</title>
        <authorList>
            <person name="Gill S.R."/>
            <person name="Fouts D.E."/>
            <person name="Archer G.L."/>
            <person name="Mongodin E.F."/>
            <person name="DeBoy R.T."/>
            <person name="Ravel J."/>
            <person name="Paulsen I.T."/>
            <person name="Kolonay J.F."/>
            <person name="Brinkac L.M."/>
            <person name="Beanan M.J."/>
            <person name="Dodson R.J."/>
            <person name="Daugherty S.C."/>
            <person name="Madupu R."/>
            <person name="Angiuoli S.V."/>
            <person name="Durkin A.S."/>
            <person name="Haft D.H."/>
            <person name="Vamathevan J.J."/>
            <person name="Khouri H."/>
            <person name="Utterback T.R."/>
            <person name="Lee C."/>
            <person name="Dimitrov G."/>
            <person name="Jiang L."/>
            <person name="Qin H."/>
            <person name="Weidman J."/>
            <person name="Tran K."/>
            <person name="Kang K.H."/>
            <person name="Hance I.R."/>
            <person name="Nelson K.E."/>
            <person name="Fraser C.M."/>
        </authorList>
    </citation>
    <scope>NUCLEOTIDE SEQUENCE [LARGE SCALE GENOMIC DNA]</scope>
    <source>
        <strain>ATCC 35984 / DSM 28319 / BCRC 17069 / CCUG 31568 / BM 3577 / RP62A</strain>
    </source>
</reference>